<keyword id="KW-0067">ATP-binding</keyword>
<keyword id="KW-0418">Kinase</keyword>
<keyword id="KW-0547">Nucleotide-binding</keyword>
<keyword id="KW-0597">Phosphoprotein</keyword>
<keyword id="KW-0723">Serine/threonine-protein kinase</keyword>
<keyword id="KW-0808">Transferase</keyword>
<dbReference type="EC" id="2.7.11.1"/>
<dbReference type="EMBL" id="AY422071">
    <property type="protein sequence ID" value="AAR00227.1"/>
    <property type="molecule type" value="mRNA"/>
</dbReference>
<dbReference type="SMR" id="Q6TGC6"/>
<dbReference type="VEuPathDB" id="FungiDB:T552_02515"/>
<dbReference type="GO" id="GO:0051285">
    <property type="term" value="C:cell cortex of cell tip"/>
    <property type="evidence" value="ECO:0007669"/>
    <property type="project" value="EnsemblFungi"/>
</dbReference>
<dbReference type="GO" id="GO:0032153">
    <property type="term" value="C:cell division site"/>
    <property type="evidence" value="ECO:0007669"/>
    <property type="project" value="EnsemblFungi"/>
</dbReference>
<dbReference type="GO" id="GO:0005935">
    <property type="term" value="C:cellular bud neck"/>
    <property type="evidence" value="ECO:0007669"/>
    <property type="project" value="EnsemblFungi"/>
</dbReference>
<dbReference type="GO" id="GO:0005934">
    <property type="term" value="C:cellular bud tip"/>
    <property type="evidence" value="ECO:0007669"/>
    <property type="project" value="EnsemblFungi"/>
</dbReference>
<dbReference type="GO" id="GO:0005856">
    <property type="term" value="C:cytoskeleton"/>
    <property type="evidence" value="ECO:0007669"/>
    <property type="project" value="TreeGrafter"/>
</dbReference>
<dbReference type="GO" id="GO:0035838">
    <property type="term" value="C:growing cell tip"/>
    <property type="evidence" value="ECO:0007669"/>
    <property type="project" value="EnsemblFungi"/>
</dbReference>
<dbReference type="GO" id="GO:0000131">
    <property type="term" value="C:incipient cellular bud site"/>
    <property type="evidence" value="ECO:0007669"/>
    <property type="project" value="EnsemblFungi"/>
</dbReference>
<dbReference type="GO" id="GO:0043332">
    <property type="term" value="C:mating projection tip"/>
    <property type="evidence" value="ECO:0007669"/>
    <property type="project" value="EnsemblFungi"/>
</dbReference>
<dbReference type="GO" id="GO:0005634">
    <property type="term" value="C:nucleus"/>
    <property type="evidence" value="ECO:0007669"/>
    <property type="project" value="EnsemblFungi"/>
</dbReference>
<dbReference type="GO" id="GO:1902554">
    <property type="term" value="C:serine/threonine protein kinase complex"/>
    <property type="evidence" value="ECO:0007669"/>
    <property type="project" value="EnsemblFungi"/>
</dbReference>
<dbReference type="GO" id="GO:0005524">
    <property type="term" value="F:ATP binding"/>
    <property type="evidence" value="ECO:0007669"/>
    <property type="project" value="UniProtKB-KW"/>
</dbReference>
<dbReference type="GO" id="GO:0042802">
    <property type="term" value="F:identical protein binding"/>
    <property type="evidence" value="ECO:0007669"/>
    <property type="project" value="EnsemblFungi"/>
</dbReference>
<dbReference type="GO" id="GO:0106310">
    <property type="term" value="F:protein serine kinase activity"/>
    <property type="evidence" value="ECO:0007669"/>
    <property type="project" value="RHEA"/>
</dbReference>
<dbReference type="GO" id="GO:0004674">
    <property type="term" value="F:protein serine/threonine kinase activity"/>
    <property type="evidence" value="ECO:0007669"/>
    <property type="project" value="UniProtKB-KW"/>
</dbReference>
<dbReference type="GO" id="GO:0031032">
    <property type="term" value="P:actomyosin structure organization"/>
    <property type="evidence" value="ECO:0007669"/>
    <property type="project" value="TreeGrafter"/>
</dbReference>
<dbReference type="GO" id="GO:0007118">
    <property type="term" value="P:budding cell apical bud growth"/>
    <property type="evidence" value="ECO:0007669"/>
    <property type="project" value="EnsemblFungi"/>
</dbReference>
<dbReference type="GO" id="GO:0071472">
    <property type="term" value="P:cellular response to salt stress"/>
    <property type="evidence" value="ECO:0007669"/>
    <property type="project" value="EnsemblFungi"/>
</dbReference>
<dbReference type="GO" id="GO:0030866">
    <property type="term" value="P:cortical actin cytoskeleton organization"/>
    <property type="evidence" value="ECO:0007669"/>
    <property type="project" value="EnsemblFungi"/>
</dbReference>
<dbReference type="GO" id="GO:0030950">
    <property type="term" value="P:establishment or maintenance of actin cytoskeleton polarity"/>
    <property type="evidence" value="ECO:0007669"/>
    <property type="project" value="EnsemblFungi"/>
</dbReference>
<dbReference type="GO" id="GO:0097248">
    <property type="term" value="P:maintenance of protein location in cell cortex of cell tip"/>
    <property type="evidence" value="ECO:0007669"/>
    <property type="project" value="EnsemblFungi"/>
</dbReference>
<dbReference type="GO" id="GO:2000247">
    <property type="term" value="P:positive regulation of establishment or maintenance of bipolar cell polarity regulating cell shape"/>
    <property type="evidence" value="ECO:0007669"/>
    <property type="project" value="EnsemblFungi"/>
</dbReference>
<dbReference type="GO" id="GO:0045921">
    <property type="term" value="P:positive regulation of exocytosis"/>
    <property type="evidence" value="ECO:0007669"/>
    <property type="project" value="EnsemblFungi"/>
</dbReference>
<dbReference type="GO" id="GO:0062200">
    <property type="term" value="P:RAM/MOR signaling"/>
    <property type="evidence" value="ECO:0007669"/>
    <property type="project" value="EnsemblFungi"/>
</dbReference>
<dbReference type="GO" id="GO:0032995">
    <property type="term" value="P:regulation of fungal-type cell wall biogenesis"/>
    <property type="evidence" value="ECO:0007669"/>
    <property type="project" value="EnsemblFungi"/>
</dbReference>
<dbReference type="GO" id="GO:0060237">
    <property type="term" value="P:regulation of fungal-type cell wall organization"/>
    <property type="evidence" value="ECO:0007669"/>
    <property type="project" value="EnsemblFungi"/>
</dbReference>
<dbReference type="GO" id="GO:0070507">
    <property type="term" value="P:regulation of microtubule cytoskeleton organization"/>
    <property type="evidence" value="ECO:0007669"/>
    <property type="project" value="EnsemblFungi"/>
</dbReference>
<dbReference type="GO" id="GO:0050708">
    <property type="term" value="P:regulation of protein secretion"/>
    <property type="evidence" value="ECO:0007669"/>
    <property type="project" value="EnsemblFungi"/>
</dbReference>
<dbReference type="GO" id="GO:0000920">
    <property type="term" value="P:septum digestion after cytokinesis"/>
    <property type="evidence" value="ECO:0007669"/>
    <property type="project" value="EnsemblFungi"/>
</dbReference>
<dbReference type="CDD" id="cd21773">
    <property type="entry name" value="MobB_CBK1"/>
    <property type="match status" value="1"/>
</dbReference>
<dbReference type="CDD" id="cd05629">
    <property type="entry name" value="STKc_NDR_like_fungal"/>
    <property type="match status" value="1"/>
</dbReference>
<dbReference type="FunFam" id="1.10.510.10:FF:000086">
    <property type="entry name" value="Non-specific serine/threonine protein kinase"/>
    <property type="match status" value="1"/>
</dbReference>
<dbReference type="FunFam" id="1.10.510.10:FF:000828">
    <property type="entry name" value="Serine/threonine-protein kinase CBK1"/>
    <property type="match status" value="1"/>
</dbReference>
<dbReference type="FunFam" id="3.30.200.20:FF:000192">
    <property type="entry name" value="Serine/threonine-protein kinase cot-1"/>
    <property type="match status" value="1"/>
</dbReference>
<dbReference type="Gene3D" id="3.30.200.20">
    <property type="entry name" value="Phosphorylase Kinase, domain 1"/>
    <property type="match status" value="1"/>
</dbReference>
<dbReference type="Gene3D" id="1.10.510.10">
    <property type="entry name" value="Transferase(Phosphotransferase) domain 1"/>
    <property type="match status" value="2"/>
</dbReference>
<dbReference type="InterPro" id="IPR000961">
    <property type="entry name" value="AGC-kinase_C"/>
</dbReference>
<dbReference type="InterPro" id="IPR011009">
    <property type="entry name" value="Kinase-like_dom_sf"/>
</dbReference>
<dbReference type="InterPro" id="IPR017892">
    <property type="entry name" value="Pkinase_C"/>
</dbReference>
<dbReference type="InterPro" id="IPR000719">
    <property type="entry name" value="Prot_kinase_dom"/>
</dbReference>
<dbReference type="InterPro" id="IPR017441">
    <property type="entry name" value="Protein_kinase_ATP_BS"/>
</dbReference>
<dbReference type="InterPro" id="IPR050839">
    <property type="entry name" value="Rho-assoc_Ser/Thr_Kinase"/>
</dbReference>
<dbReference type="InterPro" id="IPR008271">
    <property type="entry name" value="Ser/Thr_kinase_AS"/>
</dbReference>
<dbReference type="PANTHER" id="PTHR22988:SF71">
    <property type="entry name" value="CITRON RHO-INTERACTING KINASE"/>
    <property type="match status" value="1"/>
</dbReference>
<dbReference type="PANTHER" id="PTHR22988">
    <property type="entry name" value="MYOTONIC DYSTROPHY S/T KINASE-RELATED"/>
    <property type="match status" value="1"/>
</dbReference>
<dbReference type="Pfam" id="PF00069">
    <property type="entry name" value="Pkinase"/>
    <property type="match status" value="2"/>
</dbReference>
<dbReference type="Pfam" id="PF00433">
    <property type="entry name" value="Pkinase_C"/>
    <property type="match status" value="1"/>
</dbReference>
<dbReference type="SMART" id="SM00133">
    <property type="entry name" value="S_TK_X"/>
    <property type="match status" value="1"/>
</dbReference>
<dbReference type="SMART" id="SM00220">
    <property type="entry name" value="S_TKc"/>
    <property type="match status" value="1"/>
</dbReference>
<dbReference type="SUPFAM" id="SSF56112">
    <property type="entry name" value="Protein kinase-like (PK-like)"/>
    <property type="match status" value="1"/>
</dbReference>
<dbReference type="PROSITE" id="PS51285">
    <property type="entry name" value="AGC_KINASE_CTER"/>
    <property type="match status" value="1"/>
</dbReference>
<dbReference type="PROSITE" id="PS00107">
    <property type="entry name" value="PROTEIN_KINASE_ATP"/>
    <property type="match status" value="1"/>
</dbReference>
<dbReference type="PROSITE" id="PS50011">
    <property type="entry name" value="PROTEIN_KINASE_DOM"/>
    <property type="match status" value="1"/>
</dbReference>
<dbReference type="PROSITE" id="PS00108">
    <property type="entry name" value="PROTEIN_KINASE_ST"/>
    <property type="match status" value="1"/>
</dbReference>
<protein>
    <recommendedName>
        <fullName>Serine/threonine-protein kinase CBK1</fullName>
        <ecNumber>2.7.11.1</ecNumber>
    </recommendedName>
</protein>
<reference key="1">
    <citation type="journal article" date="2004" name="Infect. Immun.">
        <title>Pneumocystis carinii cell wall biosynthesis kinase gene CBK1 is an environmentally responsive gene that complements cell wall defects of cbk-deficient yeast.</title>
        <authorList>
            <person name="Kottom T.J."/>
            <person name="Limper A.H."/>
        </authorList>
    </citation>
    <scope>NUCLEOTIDE SEQUENCE [MRNA]</scope>
</reference>
<feature type="chain" id="PRO_0000085695" description="Serine/threonine-protein kinase CBK1">
    <location>
        <begin position="1"/>
        <end position="507"/>
    </location>
</feature>
<feature type="domain" description="Protein kinase" evidence="1">
    <location>
        <begin position="126"/>
        <end position="431"/>
    </location>
</feature>
<feature type="domain" description="AGC-kinase C-terminal" evidence="2">
    <location>
        <begin position="432"/>
        <end position="505"/>
    </location>
</feature>
<feature type="region of interest" description="Disordered" evidence="4">
    <location>
        <begin position="1"/>
        <end position="30"/>
    </location>
</feature>
<feature type="active site" description="Proton acceptor" evidence="1 3">
    <location>
        <position position="249"/>
    </location>
</feature>
<feature type="binding site" evidence="1">
    <location>
        <begin position="132"/>
        <end position="140"/>
    </location>
    <ligand>
        <name>ATP</name>
        <dbReference type="ChEBI" id="CHEBI:30616"/>
    </ligand>
</feature>
<feature type="binding site" evidence="1">
    <location>
        <position position="155"/>
    </location>
    <ligand>
        <name>ATP</name>
        <dbReference type="ChEBI" id="CHEBI:30616"/>
    </ligand>
</feature>
<proteinExistence type="evidence at transcript level"/>
<name>CBK1_PNECA</name>
<accession>Q6TGC6</accession>
<gene>
    <name type="primary">CBK1</name>
</gene>
<evidence type="ECO:0000255" key="1">
    <source>
        <dbReference type="PROSITE-ProRule" id="PRU00159"/>
    </source>
</evidence>
<evidence type="ECO:0000255" key="2">
    <source>
        <dbReference type="PROSITE-ProRule" id="PRU00618"/>
    </source>
</evidence>
<evidence type="ECO:0000255" key="3">
    <source>
        <dbReference type="PROSITE-ProRule" id="PRU10027"/>
    </source>
</evidence>
<evidence type="ECO:0000256" key="4">
    <source>
        <dbReference type="SAM" id="MobiDB-lite"/>
    </source>
</evidence>
<evidence type="ECO:0000305" key="5"/>
<sequence>MQKVSGSGKKTTAFQQRKSDSVYNNNEMNKGTSSISYDPVYFVRDASSFTKTTHERAASVKLKLEHLYKVTVEQTVERNQRRMDFEAKLAQDRGSEERKKRQLNSLGQKESQFLRLRRTKLSLNDFHTVKVIGKGAFGEVRLVQKIDTGKIYAMKTLLKSEMFKKDQLAHVKAERDVLAESDSPWVVSLYYSFQDSQYLYLIMEFLPGGDLMTMLIKYDTFSEDVTRFYIAECILAIEAVHKLGFIHRDIKPDNILIDKTGHIKLSDFGLSMGFHKTHDNAYYQRLFESKINTSTSSTQNSLMVDTISLTMSSKDKIATWKKNRRIMAYSTVGTPDYIAPEIFTQHGYGQECDWWSLGAIMFECLIGWPPFCSENAHETYRKIINWRENLYFPEDLHLSAEAEDLIRKLLTSADQRLGRYGANDIKLHPFFRGVNWDTIREINAPFIPQLKSITDTSYFEEIDTIPNITMNSPPVLQNKIPSDVDQNLAFVGYTYKRFDMMTQKGIL</sequence>
<organism>
    <name type="scientific">Pneumocystis carinii</name>
    <dbReference type="NCBI Taxonomy" id="4754"/>
    <lineage>
        <taxon>Eukaryota</taxon>
        <taxon>Fungi</taxon>
        <taxon>Dikarya</taxon>
        <taxon>Ascomycota</taxon>
        <taxon>Taphrinomycotina</taxon>
        <taxon>Pneumocystomycetes</taxon>
        <taxon>Pneumocystaceae</taxon>
        <taxon>Pneumocystis</taxon>
    </lineage>
</organism>
<comment type="function">
    <text>Protein kinase that seems to play a role in signaling pathways necessary for cell growth and mating.</text>
</comment>
<comment type="catalytic activity">
    <reaction>
        <text>L-seryl-[protein] + ATP = O-phospho-L-seryl-[protein] + ADP + H(+)</text>
        <dbReference type="Rhea" id="RHEA:17989"/>
        <dbReference type="Rhea" id="RHEA-COMP:9863"/>
        <dbReference type="Rhea" id="RHEA-COMP:11604"/>
        <dbReference type="ChEBI" id="CHEBI:15378"/>
        <dbReference type="ChEBI" id="CHEBI:29999"/>
        <dbReference type="ChEBI" id="CHEBI:30616"/>
        <dbReference type="ChEBI" id="CHEBI:83421"/>
        <dbReference type="ChEBI" id="CHEBI:456216"/>
        <dbReference type="EC" id="2.7.11.1"/>
    </reaction>
</comment>
<comment type="catalytic activity">
    <reaction>
        <text>L-threonyl-[protein] + ATP = O-phospho-L-threonyl-[protein] + ADP + H(+)</text>
        <dbReference type="Rhea" id="RHEA:46608"/>
        <dbReference type="Rhea" id="RHEA-COMP:11060"/>
        <dbReference type="Rhea" id="RHEA-COMP:11605"/>
        <dbReference type="ChEBI" id="CHEBI:15378"/>
        <dbReference type="ChEBI" id="CHEBI:30013"/>
        <dbReference type="ChEBI" id="CHEBI:30616"/>
        <dbReference type="ChEBI" id="CHEBI:61977"/>
        <dbReference type="ChEBI" id="CHEBI:456216"/>
        <dbReference type="EC" id="2.7.11.1"/>
    </reaction>
</comment>
<comment type="similarity">
    <text evidence="5">Belongs to the protein kinase superfamily. STE Ser/Thr protein kinase family. COT1 subfamily.</text>
</comment>